<gene>
    <name type="primary">uspB</name>
    <name type="ordered locus">SCH_3519</name>
</gene>
<sequence>MISTVSLFWALCVVCIVNMARYFSSLRALLVVLRGCDPLLYQYVDGGGFFTTHGQPNKQVRLVWYIYAQRYRDHHDEEFIRRCERVRRQFLLTSALCGLVVVSLIALMIWH</sequence>
<reference key="1">
    <citation type="journal article" date="2005" name="Nucleic Acids Res.">
        <title>The genome sequence of Salmonella enterica serovar Choleraesuis, a highly invasive and resistant zoonotic pathogen.</title>
        <authorList>
            <person name="Chiu C.-H."/>
            <person name="Tang P."/>
            <person name="Chu C."/>
            <person name="Hu S."/>
            <person name="Bao Q."/>
            <person name="Yu J."/>
            <person name="Chou Y.-Y."/>
            <person name="Wang H.-S."/>
            <person name="Lee Y.-S."/>
        </authorList>
    </citation>
    <scope>NUCLEOTIDE SEQUENCE [LARGE SCALE GENOMIC DNA]</scope>
    <source>
        <strain>SC-B67</strain>
    </source>
</reference>
<keyword id="KW-0997">Cell inner membrane</keyword>
<keyword id="KW-1003">Cell membrane</keyword>
<keyword id="KW-0472">Membrane</keyword>
<keyword id="KW-0812">Transmembrane</keyword>
<keyword id="KW-1133">Transmembrane helix</keyword>
<feature type="chain" id="PRO_0000212045" description="Universal stress protein B">
    <location>
        <begin position="1"/>
        <end position="111"/>
    </location>
</feature>
<feature type="transmembrane region" description="Helical" evidence="2">
    <location>
        <begin position="1"/>
        <end position="21"/>
    </location>
</feature>
<feature type="topological domain" description="Cytoplasmic" evidence="2">
    <location>
        <begin position="22"/>
        <end position="89"/>
    </location>
</feature>
<feature type="transmembrane region" description="Helical" evidence="2">
    <location>
        <begin position="90"/>
        <end position="110"/>
    </location>
</feature>
<feature type="topological domain" description="Periplasmic" evidence="2">
    <location>
        <position position="111"/>
    </location>
</feature>
<evidence type="ECO:0000250" key="1"/>
<evidence type="ECO:0000255" key="2"/>
<evidence type="ECO:0000305" key="3"/>
<comment type="subcellular location">
    <subcellularLocation>
        <location evidence="1">Cell inner membrane</location>
        <topology evidence="1">Multi-pass membrane protein</topology>
    </subcellularLocation>
</comment>
<comment type="similarity">
    <text evidence="3">Belongs to the universal stress protein B family.</text>
</comment>
<organism>
    <name type="scientific">Salmonella choleraesuis (strain SC-B67)</name>
    <dbReference type="NCBI Taxonomy" id="321314"/>
    <lineage>
        <taxon>Bacteria</taxon>
        <taxon>Pseudomonadati</taxon>
        <taxon>Pseudomonadota</taxon>
        <taxon>Gammaproteobacteria</taxon>
        <taxon>Enterobacterales</taxon>
        <taxon>Enterobacteriaceae</taxon>
        <taxon>Salmonella</taxon>
    </lineage>
</organism>
<dbReference type="EMBL" id="AE017220">
    <property type="protein sequence ID" value="AAX67425.1"/>
    <property type="molecule type" value="Genomic_DNA"/>
</dbReference>
<dbReference type="RefSeq" id="WP_000626193.1">
    <property type="nucleotide sequence ID" value="NC_006905.1"/>
</dbReference>
<dbReference type="GeneID" id="66757914"/>
<dbReference type="KEGG" id="sec:SCH_3519"/>
<dbReference type="HOGENOM" id="CLU_151816_0_0_6"/>
<dbReference type="Proteomes" id="UP000000538">
    <property type="component" value="Chromosome"/>
</dbReference>
<dbReference type="GO" id="GO:0005886">
    <property type="term" value="C:plasma membrane"/>
    <property type="evidence" value="ECO:0007669"/>
    <property type="project" value="UniProtKB-SubCell"/>
</dbReference>
<dbReference type="HAMAP" id="MF_01088">
    <property type="entry name" value="UspB"/>
    <property type="match status" value="1"/>
</dbReference>
<dbReference type="InterPro" id="IPR019598">
    <property type="entry name" value="Universal_stress_protein_B"/>
</dbReference>
<dbReference type="NCBIfam" id="NF003435">
    <property type="entry name" value="PRK04960.1"/>
    <property type="match status" value="1"/>
</dbReference>
<dbReference type="Pfam" id="PF10625">
    <property type="entry name" value="UspB"/>
    <property type="match status" value="1"/>
</dbReference>
<name>USPB_SALCH</name>
<proteinExistence type="inferred from homology"/>
<accession>Q57IN7</accession>
<protein>
    <recommendedName>
        <fullName>Universal stress protein B</fullName>
    </recommendedName>
</protein>